<protein>
    <recommendedName>
        <fullName>Heat shock 70 kDa protein 1B</fullName>
    </recommendedName>
    <alternativeName>
        <fullName>Heat shock 70 kDa protein 1</fullName>
        <shortName>HSP70-1</shortName>
        <shortName>HSP70.1</shortName>
    </alternativeName>
</protein>
<sequence length="641" mass="70185">MAKKTAIGIDLGTTYSCVGVFQHGKVEIIANDQGNRTTPSYVAFTDTERLIGDAAKNQVALNPQNTVFDAKRLIGRKFGDPVVQSDMKHWPFQVVNDGDKPKVQVNYKGENRSFYPEEISSMVLTKMKEIAEAYLGHPVTNAVITVPAYFNDSQRQATKDAGVIAGLNVLRIINEPTAAAIAYGLDRTGKGERNVLIFDLGGGTFDVSILTIDDGIFEVKATAGDTHLGGEDFDNRLVSHFVEEFKRKHKKDISQNKRAVRRLRTACERAKRTLSSSTQASLEIDSLFEGIDFYTSITRARFEELCSDLFRGTLEPVEKALRDAKLDKAQIHDLVLVGGSTRIPKVQKLLQDFFNGRDLNKSINPDEAVAYGAAVQAAILMGDKSENVQDLLLLDVAPLSLGLETAGGVMTALIKRNSTIPTKQTQTFTTYSDNQPGVLIQVYEGERAMTRDNNLLGRFELSGIPPAPRGVPQIEVTFDIDANGILNVTATDKSTGKANKITITNDKGRLSKEEIERMVQEAERYKAEDEVQRERVAAKNALESYAFNMKSAVEDEGLKGKISEADKKKVLDKCQEVISWLDSNTLAEKEEFVHKREELERVCNPIISGLYQGAGAPGAGGFGAQAPKGGSGSGPTIEEVD</sequence>
<comment type="function">
    <text evidence="2">Molecular chaperone implicated in a wide variety of cellular processes, including protection of the proteome from stress, folding and transport of newly synthesized polypeptides, activation of proteolysis of misfolded proteins and the formation and dissociation of protein complexes. Plays a pivotal role in the protein quality control system, ensuring the correct folding of proteins, the re-folding of misfolded proteins and controlling the targeting of proteins for subsequent degradation. This is achieved through cycles of ATP binding, ATP hydrolysis and ADP release, mediated by co-chaperones. The co-chaperones have been shown to not only regulate different steps of the ATPase cycle, but they also have an individual specificity such that one co-chaperone may promote folding of a substrate while another may promote degradation. The affinity for polypeptides is regulated by its nucleotide bound state. In the ATP-bound form, it has a low affinity for substrate proteins. However, upon hydrolysis of the ATP to ADP, it undergoes a conformational change that increases its affinity for substrate proteins. It goes through repeated cycles of ATP hydrolysis and nucleotide exchange, which permits cycles of substrate binding and release. The co-chaperones are of three types: J-domain co-chaperones such as HSP40s (stimulate ATPase hydrolysis by HSP70), the nucleotide exchange factors (NEF) such as BAG1/2/3 (facilitate conversion of HSP70 from the ADP-bound to the ATP-bound state thereby promoting substrate release), and the TPR domain chaperones such as HOPX and STUB1. Maintains protein homeostasis during cellular stress through two opposing mechanisms: protein refolding and degradation. Its acetylation/deacetylation state determines whether it functions in protein refolding or protein degradation by controlling the competitive binding of co-chaperones HOPX and STUB1. During the early stress response, the acetylated form binds to HOPX which assists in chaperone-mediated protein refolding, thereafter, it is deacetylated and binds to ubiquitin ligase STUB1 that promotes ubiquitin-mediated protein degradation. Regulates centrosome integrity during mitosis, and is required for the maintenance of a functional mitotic centrosome that supports the assembly of a bipolar mitotic spindle. Enhances STUB1-mediated SMAD3 ubiquitination and degradation and facilitates STUB1-mediated inhibition of TGF-beta signaling. Essential for STUB1-mediated ubiquitination and degradation of FOXP3 in regulatory T-cells (Treg) during inflammation.</text>
</comment>
<comment type="subunit">
    <text evidence="2">May be an auxiliary component of the CatSper complex. Identified in a IGF2BP1-dependent mRNP granule complex containing untranslated mRNAs. Interacts with CHCHD3, DNAJC7, IRAK1BP1, PPP5C and TSC2. Interacts with TERT; the interaction occurs in the absence of the RNA component, TERC, and dissociates once the TERT complex has formed. Interacts with METTL21A. Interacts with TRIM5 (via B30.2/SPRY domain). Interacts with PRKN. Interacts with FOXP3. Interacts with NOD2; the interaction enhances NOD2 stability. Interacts with DNAJC9 (via J domain). Interacts with ATF5; the interaction protects ATF5 from degradation via proteasome-dependent and caspase-dependent processes. Interacts with NAA10, HSP40, HSP90 and HDAC4. The acetylated form and the non-acetylated form interact with HOPX and STUB1 respectively. Interacts with NEDD1 and SMAD3. Interacts (via NBD) with BAG1, BAG2, BAG3 and HSPH1/HSP105. Interacts with DNAJC8.</text>
</comment>
<comment type="subcellular location">
    <subcellularLocation>
        <location evidence="2">Cytoplasm</location>
    </subcellularLocation>
    <subcellularLocation>
        <location evidence="2">Cytoplasm</location>
        <location evidence="2">Cytoskeleton</location>
        <location evidence="2">Microtubule organizing center</location>
        <location evidence="2">Centrosome</location>
    </subcellularLocation>
    <text evidence="2">Localized in cytoplasmic mRNP granules containing untranslated mRNAs.</text>
</comment>
<comment type="tissue specificity">
    <text>HSPA1B is testis-specific.</text>
</comment>
<comment type="induction">
    <text>By heat shock.</text>
</comment>
<comment type="domain">
    <text evidence="2">The N-terminal nucleotide binding domain (NBD) (also known as the ATPase domain) is responsible for binding and hydrolyzing ATP. The C-terminal substrate-binding domain (SBD) (also known as peptide-binding domain) binds to the client/substrate proteins. The two domains are allosterically coupled so that, when ATP is bound to the NBD, the SBD binds relatively weakly to clients. When ADP is bound in the NBD, a conformational change enhances the affinity of the SBD for client proteins.</text>
</comment>
<comment type="PTM">
    <text evidence="2">In response to cellular stress, acetylated at Lys-77 by NA110 and then gradually deacetylated by HDAC4 at later stages. Acetylation enhances its chaperone activity and also determines whether it will function as a chaperone for protein refolding or degradation by controlling its binding to co-chaperones HOPX and STUB1. The acetylated form and the non-acetylated form bind to HOPX and STUB1 respectively. Acetylation also protects cells against various types of cellular stress.</text>
</comment>
<comment type="similarity">
    <text evidence="5">Belongs to the heat shock protein 70 family.</text>
</comment>
<organism>
    <name type="scientific">Rattus norvegicus</name>
    <name type="common">Rat</name>
    <dbReference type="NCBI Taxonomy" id="10116"/>
    <lineage>
        <taxon>Eukaryota</taxon>
        <taxon>Metazoa</taxon>
        <taxon>Chordata</taxon>
        <taxon>Craniata</taxon>
        <taxon>Vertebrata</taxon>
        <taxon>Euteleostomi</taxon>
        <taxon>Mammalia</taxon>
        <taxon>Eutheria</taxon>
        <taxon>Euarchontoglires</taxon>
        <taxon>Glires</taxon>
        <taxon>Rodentia</taxon>
        <taxon>Myomorpha</taxon>
        <taxon>Muroidea</taxon>
        <taxon>Muridae</taxon>
        <taxon>Murinae</taxon>
        <taxon>Rattus</taxon>
    </lineage>
</organism>
<keyword id="KW-0007">Acetylation</keyword>
<keyword id="KW-0067">ATP-binding</keyword>
<keyword id="KW-0143">Chaperone</keyword>
<keyword id="KW-0963">Cytoplasm</keyword>
<keyword id="KW-0206">Cytoskeleton</keyword>
<keyword id="KW-0488">Methylation</keyword>
<keyword id="KW-0547">Nucleotide-binding</keyword>
<keyword id="KW-0597">Phosphoprotein</keyword>
<keyword id="KW-1185">Reference proteome</keyword>
<keyword id="KW-0346">Stress response</keyword>
<name>HS71B_RAT</name>
<accession>P0DMW1</accession>
<accession>P42853</accession>
<accession>Q07439</accession>
<accession>Q63256</accession>
<gene>
    <name type="primary">Hspa1b</name>
    <name type="synonym">Hsp70-2</name>
    <name type="synonym">Hspa2</name>
</gene>
<reference key="1">
    <citation type="journal article" date="1993" name="J. Neurosci. Res.">
        <title>cDNA cloning and expression of stress-inducible rat hsp70 in normal and injured rat brain.</title>
        <authorList>
            <person name="Longo F.M."/>
            <person name="Wang S."/>
            <person name="Narasimhan P."/>
            <person name="Zhang J.S."/>
            <person name="Chen J."/>
            <person name="Massa S.M."/>
            <person name="Sharp F.R."/>
        </authorList>
    </citation>
    <scope>NUCLEOTIDE SEQUENCE [MRNA]</scope>
    <source>
        <tissue>Brain</tissue>
    </source>
</reference>
<reference key="2">
    <citation type="journal article" date="1994" name="Biochim. Biophys. Acta">
        <title>Cloning, nucleotide sequence and expression of rat heat inducible hsp70 gene.</title>
        <authorList>
            <person name="Lisowska K."/>
            <person name="Krawczyk Z."/>
            <person name="Widlak W."/>
            <person name="Wolniczek P."/>
            <person name="Wisniewski J."/>
        </authorList>
    </citation>
    <scope>NUCLEOTIDE SEQUENCE [GENOMIC DNA]</scope>
    <source>
        <strain>Sprague-Dawley</strain>
        <tissue>Liver</tissue>
    </source>
</reference>
<reference key="3">
    <citation type="journal article" date="1994" name="Biochem. J.">
        <title>Isolation of a novel inducible rat heat shock protein (HSP70) gene and its expression during ischaemia/hypoxia and heat shock.</title>
        <authorList>
            <person name="Mestril R."/>
            <person name="Chi S.H."/>
            <person name="Sayen M.R."/>
            <person name="Dillmann W.H."/>
        </authorList>
    </citation>
    <scope>NUCLEOTIDE SEQUENCE [GENOMIC DNA]</scope>
    <source>
        <strain>Wistar</strain>
        <tissue>Spleen</tissue>
    </source>
</reference>
<reference key="4">
    <citation type="journal article" date="1994" name="Immunogenetics">
        <title>Comparative analysis of the three major histocompatibility complex-linked heat shock protein 70 (Hsp70) genes of the rat.</title>
        <authorList>
            <person name="Walter L."/>
            <person name="Rauh F."/>
            <person name="Guenther E."/>
        </authorList>
    </citation>
    <scope>NUCLEOTIDE SEQUENCE [GENOMIC DNA]</scope>
    <source>
        <strain>LEW.1W/GUN</strain>
    </source>
</reference>
<reference key="5">
    <citation type="journal article" date="2004" name="Genome Res.">
        <title>The genomic sequence and comparative analysis of the rat major histocompatibility complex.</title>
        <authorList>
            <person name="Hurt P."/>
            <person name="Walter L."/>
            <person name="Sudbrak R."/>
            <person name="Klages S."/>
            <person name="Mueller I."/>
            <person name="Shiina T."/>
            <person name="Inoko H."/>
            <person name="Lehrach H."/>
            <person name="Guenther E."/>
            <person name="Reinhardt R."/>
            <person name="Himmelbauer H."/>
        </authorList>
    </citation>
    <scope>NUCLEOTIDE SEQUENCE [LARGE SCALE GENOMIC DNA]</scope>
    <source>
        <strain>Brown Norway</strain>
    </source>
</reference>
<evidence type="ECO:0000250" key="1"/>
<evidence type="ECO:0000250" key="2">
    <source>
        <dbReference type="UniProtKB" id="P0DMV9"/>
    </source>
</evidence>
<evidence type="ECO:0000250" key="3">
    <source>
        <dbReference type="UniProtKB" id="P11142"/>
    </source>
</evidence>
<evidence type="ECO:0000256" key="4">
    <source>
        <dbReference type="SAM" id="MobiDB-lite"/>
    </source>
</evidence>
<evidence type="ECO:0000305" key="5"/>
<proteinExistence type="evidence at transcript level"/>
<feature type="initiator methionine" description="Removed" evidence="2">
    <location>
        <position position="1"/>
    </location>
</feature>
<feature type="chain" id="PRO_0000433116" description="Heat shock 70 kDa protein 1B">
    <location>
        <begin position="2"/>
        <end position="641"/>
    </location>
</feature>
<feature type="region of interest" description="Nucleotide-binding domain (NBD)" evidence="3">
    <location>
        <begin position="2"/>
        <end position="386"/>
    </location>
</feature>
<feature type="region of interest" description="Substrate-binding domain (SBD)" evidence="3">
    <location>
        <begin position="394"/>
        <end position="509"/>
    </location>
</feature>
<feature type="region of interest" description="Disordered" evidence="4">
    <location>
        <begin position="618"/>
        <end position="641"/>
    </location>
</feature>
<feature type="compositionally biased region" description="Gly residues" evidence="4">
    <location>
        <begin position="618"/>
        <end position="633"/>
    </location>
</feature>
<feature type="binding site" evidence="1">
    <location>
        <begin position="12"/>
        <end position="15"/>
    </location>
    <ligand>
        <name>ATP</name>
        <dbReference type="ChEBI" id="CHEBI:30616"/>
    </ligand>
</feature>
<feature type="binding site" evidence="1">
    <location>
        <position position="71"/>
    </location>
    <ligand>
        <name>ATP</name>
        <dbReference type="ChEBI" id="CHEBI:30616"/>
    </ligand>
</feature>
<feature type="binding site" evidence="1">
    <location>
        <begin position="202"/>
        <end position="204"/>
    </location>
    <ligand>
        <name>ATP</name>
        <dbReference type="ChEBI" id="CHEBI:30616"/>
    </ligand>
</feature>
<feature type="binding site" evidence="1">
    <location>
        <begin position="268"/>
        <end position="275"/>
    </location>
    <ligand>
        <name>ATP</name>
        <dbReference type="ChEBI" id="CHEBI:30616"/>
    </ligand>
</feature>
<feature type="binding site" evidence="1">
    <location>
        <begin position="339"/>
        <end position="342"/>
    </location>
    <ligand>
        <name>ATP</name>
        <dbReference type="ChEBI" id="CHEBI:30616"/>
    </ligand>
</feature>
<feature type="modified residue" description="N-acetylalanine" evidence="2">
    <location>
        <position position="2"/>
    </location>
</feature>
<feature type="modified residue" description="N6-acetyllysine" evidence="2">
    <location>
        <position position="77"/>
    </location>
</feature>
<feature type="modified residue" description="N6-acetyllysine" evidence="2">
    <location>
        <position position="108"/>
    </location>
</feature>
<feature type="modified residue" description="N6-acetyllysine" evidence="2">
    <location>
        <position position="246"/>
    </location>
</feature>
<feature type="modified residue" description="N6-acetyllysine" evidence="2">
    <location>
        <position position="348"/>
    </location>
</feature>
<feature type="modified residue" description="Omega-N-methylarginine" evidence="2">
    <location>
        <position position="469"/>
    </location>
</feature>
<feature type="modified residue" description="N6,N6,N6-trimethyllysine; by METTL21A; alternate" evidence="2">
    <location>
        <position position="561"/>
    </location>
</feature>
<feature type="modified residue" description="N6,N6-dimethyllysine; alternate" evidence="2">
    <location>
        <position position="561"/>
    </location>
</feature>
<feature type="modified residue" description="Phosphoserine" evidence="2">
    <location>
        <position position="631"/>
    </location>
</feature>
<feature type="modified residue" description="Phosphoserine" evidence="2">
    <location>
        <position position="633"/>
    </location>
</feature>
<feature type="modified residue" description="Phosphothreonine" evidence="2">
    <location>
        <position position="636"/>
    </location>
</feature>
<feature type="sequence conflict" description="In Ref. 2; CAA52328 and 3; CAA53140." evidence="5" ref="2 3">
    <original>KR</original>
    <variation>NG</variation>
    <location>
        <begin position="71"/>
        <end position="72"/>
    </location>
</feature>
<feature type="sequence conflict" description="In Ref. 3; CAA53140." evidence="5" ref="3">
    <original>E</original>
    <variation>K</variation>
    <location>
        <position position="110"/>
    </location>
</feature>
<feature type="sequence conflict" description="In Ref. 3; CAA53140." evidence="5" ref="3">
    <original>T</original>
    <variation>R</variation>
    <location>
        <position position="204"/>
    </location>
</feature>
<feature type="sequence conflict" description="In Ref. 1; AAA17441." evidence="5" ref="1">
    <original>H</original>
    <variation>D</variation>
    <location>
        <position position="227"/>
    </location>
</feature>
<feature type="sequence conflict" description="In Ref. 3; CAA53140." evidence="5" ref="3">
    <original>RLRTAC</original>
    <variation>PLADGV</variation>
    <location>
        <begin position="262"/>
        <end position="267"/>
    </location>
</feature>
<feature type="sequence conflict" description="In Ref. 2; CAA52328." evidence="5" ref="2">
    <original>G</original>
    <variation>A</variation>
    <location>
        <position position="408"/>
    </location>
</feature>
<dbReference type="EMBL" id="L16764">
    <property type="protein sequence ID" value="AAA17441.1"/>
    <property type="molecule type" value="mRNA"/>
</dbReference>
<dbReference type="EMBL" id="X74271">
    <property type="protein sequence ID" value="CAA52328.1"/>
    <property type="molecule type" value="Genomic_DNA"/>
</dbReference>
<dbReference type="EMBL" id="X75357">
    <property type="protein sequence ID" value="CAA53140.1"/>
    <property type="molecule type" value="Genomic_DNA"/>
</dbReference>
<dbReference type="EMBL" id="X77207">
    <property type="protein sequence ID" value="CAA54422.1"/>
    <property type="molecule type" value="Genomic_DNA"/>
</dbReference>
<dbReference type="EMBL" id="BX883045">
    <property type="protein sequence ID" value="CAE83977.1"/>
    <property type="molecule type" value="Genomic_DNA"/>
</dbReference>
<dbReference type="PIR" id="I54542">
    <property type="entry name" value="I54542"/>
</dbReference>
<dbReference type="RefSeq" id="NP_001316825.2">
    <property type="nucleotide sequence ID" value="NM_001329896.2"/>
</dbReference>
<dbReference type="RefSeq" id="NP_114177.2">
    <property type="nucleotide sequence ID" value="NM_031971.2"/>
</dbReference>
<dbReference type="RefSeq" id="NP_997669.1">
    <property type="nucleotide sequence ID" value="NM_212504.1"/>
</dbReference>
<dbReference type="RefSeq" id="XP_017457331.1">
    <property type="nucleotide sequence ID" value="XM_017601842.1"/>
</dbReference>
<dbReference type="SMR" id="P0DMW1"/>
<dbReference type="FunCoup" id="P0DMW1">
    <property type="interactions" value="2397"/>
</dbReference>
<dbReference type="jPOST" id="P0DMW1"/>
<dbReference type="DNASU" id="24472"/>
<dbReference type="GeneID" id="108348108"/>
<dbReference type="GeneID" id="24472"/>
<dbReference type="KEGG" id="rno:108348108"/>
<dbReference type="KEGG" id="rno:24472"/>
<dbReference type="AGR" id="RGD:1593284"/>
<dbReference type="AGR" id="RGD:2840"/>
<dbReference type="CTD" id="3303"/>
<dbReference type="CTD" id="3304"/>
<dbReference type="RGD" id="2840">
    <property type="gene designation" value="Hspa1b"/>
</dbReference>
<dbReference type="VEuPathDB" id="HostDB:ENSRNOG00000045654"/>
<dbReference type="VEuPathDB" id="HostDB:ENSRNOG00000050647"/>
<dbReference type="InParanoid" id="P0DMW1"/>
<dbReference type="OrthoDB" id="50143at9989"/>
<dbReference type="PhylomeDB" id="P0DMW1"/>
<dbReference type="Reactome" id="R-RNO-3371453">
    <property type="pathway name" value="Regulation of HSF1-mediated heat shock response"/>
</dbReference>
<dbReference type="Reactome" id="R-RNO-3371497">
    <property type="pathway name" value="HSP90 chaperone cycle for steroid hormone receptors (SHR) in the presence of ligand"/>
</dbReference>
<dbReference type="Reactome" id="R-RNO-3371568">
    <property type="pathway name" value="Attenuation phase"/>
</dbReference>
<dbReference type="Reactome" id="R-RNO-3371571">
    <property type="pathway name" value="HSF1-dependent transactivation"/>
</dbReference>
<dbReference type="Reactome" id="R-RNO-450408">
    <property type="pathway name" value="AUF1 (hnRNP D0) binds and destabilizes mRNA"/>
</dbReference>
<dbReference type="Reactome" id="R-RNO-6798695">
    <property type="pathway name" value="Neutrophil degranulation"/>
</dbReference>
<dbReference type="Reactome" id="R-RNO-9833482">
    <property type="pathway name" value="PKR-mediated signaling"/>
</dbReference>
<dbReference type="Reactome" id="R-RNO-9841251">
    <property type="pathway name" value="Mitochondrial unfolded protein response (UPRmt)"/>
</dbReference>
<dbReference type="CD-CODE" id="246D7041">
    <property type="entry name" value="Chromatoid body"/>
</dbReference>
<dbReference type="PRO" id="PR:P0DMW1"/>
<dbReference type="Proteomes" id="UP000002494">
    <property type="component" value="Chromosome 20"/>
</dbReference>
<dbReference type="Bgee" id="ENSRNOG00000045654">
    <property type="expression patterns" value="Expressed in esophagus and 17 other cell types or tissues"/>
</dbReference>
<dbReference type="ExpressionAtlas" id="P0DMW1">
    <property type="expression patterns" value="baseline and differential"/>
</dbReference>
<dbReference type="GO" id="GO:0016235">
    <property type="term" value="C:aggresome"/>
    <property type="evidence" value="ECO:0000266"/>
    <property type="project" value="RGD"/>
</dbReference>
<dbReference type="GO" id="GO:0016324">
    <property type="term" value="C:apical plasma membrane"/>
    <property type="evidence" value="ECO:0000314"/>
    <property type="project" value="RGD"/>
</dbReference>
<dbReference type="GO" id="GO:0016323">
    <property type="term" value="C:basolateral plasma membrane"/>
    <property type="evidence" value="ECO:0000314"/>
    <property type="project" value="RGD"/>
</dbReference>
<dbReference type="GO" id="GO:0044297">
    <property type="term" value="C:cell body"/>
    <property type="evidence" value="ECO:0000266"/>
    <property type="project" value="RGD"/>
</dbReference>
<dbReference type="GO" id="GO:0005814">
    <property type="term" value="C:centriole"/>
    <property type="evidence" value="ECO:0000266"/>
    <property type="project" value="RGD"/>
</dbReference>
<dbReference type="GO" id="GO:0005813">
    <property type="term" value="C:centrosome"/>
    <property type="evidence" value="ECO:0000250"/>
    <property type="project" value="UniProtKB"/>
</dbReference>
<dbReference type="GO" id="GO:0008180">
    <property type="term" value="C:COP9 signalosome"/>
    <property type="evidence" value="ECO:0000266"/>
    <property type="project" value="RGD"/>
</dbReference>
<dbReference type="GO" id="GO:0005737">
    <property type="term" value="C:cytoplasm"/>
    <property type="evidence" value="ECO:0000266"/>
    <property type="project" value="RGD"/>
</dbReference>
<dbReference type="GO" id="GO:0005829">
    <property type="term" value="C:cytosol"/>
    <property type="evidence" value="ECO:0000266"/>
    <property type="project" value="RGD"/>
</dbReference>
<dbReference type="GO" id="GO:0005615">
    <property type="term" value="C:extracellular space"/>
    <property type="evidence" value="ECO:0000266"/>
    <property type="project" value="RGD"/>
</dbReference>
<dbReference type="GO" id="GO:0016234">
    <property type="term" value="C:inclusion body"/>
    <property type="evidence" value="ECO:0000266"/>
    <property type="project" value="RGD"/>
</dbReference>
<dbReference type="GO" id="GO:0045121">
    <property type="term" value="C:membrane raft"/>
    <property type="evidence" value="ECO:0000314"/>
    <property type="project" value="CAFA"/>
</dbReference>
<dbReference type="GO" id="GO:0005739">
    <property type="term" value="C:mitochondrion"/>
    <property type="evidence" value="ECO:0000266"/>
    <property type="project" value="RGD"/>
</dbReference>
<dbReference type="GO" id="GO:0016607">
    <property type="term" value="C:nuclear speck"/>
    <property type="evidence" value="ECO:0000250"/>
    <property type="project" value="UniProtKB"/>
</dbReference>
<dbReference type="GO" id="GO:0005634">
    <property type="term" value="C:nucleus"/>
    <property type="evidence" value="ECO:0000266"/>
    <property type="project" value="RGD"/>
</dbReference>
<dbReference type="GO" id="GO:0048471">
    <property type="term" value="C:perinuclear region of cytoplasm"/>
    <property type="evidence" value="ECO:0000250"/>
    <property type="project" value="UniProtKB"/>
</dbReference>
<dbReference type="GO" id="GO:0005886">
    <property type="term" value="C:plasma membrane"/>
    <property type="evidence" value="ECO:0000318"/>
    <property type="project" value="GO_Central"/>
</dbReference>
<dbReference type="GO" id="GO:0032991">
    <property type="term" value="C:protein-containing complex"/>
    <property type="evidence" value="ECO:0000314"/>
    <property type="project" value="RGD"/>
</dbReference>
<dbReference type="GO" id="GO:1990904">
    <property type="term" value="C:ribonucleoprotein complex"/>
    <property type="evidence" value="ECO:0000266"/>
    <property type="project" value="RGD"/>
</dbReference>
<dbReference type="GO" id="GO:0002199">
    <property type="term" value="C:zona pellucida receptor complex"/>
    <property type="evidence" value="ECO:0000266"/>
    <property type="project" value="RGD"/>
</dbReference>
<dbReference type="GO" id="GO:0005524">
    <property type="term" value="F:ATP binding"/>
    <property type="evidence" value="ECO:0000266"/>
    <property type="project" value="RGD"/>
</dbReference>
<dbReference type="GO" id="GO:0016887">
    <property type="term" value="F:ATP hydrolysis activity"/>
    <property type="evidence" value="ECO:0000266"/>
    <property type="project" value="RGD"/>
</dbReference>
<dbReference type="GO" id="GO:0140545">
    <property type="term" value="F:ATP-dependent protein disaggregase activity"/>
    <property type="evidence" value="ECO:0000266"/>
    <property type="project" value="RGD"/>
</dbReference>
<dbReference type="GO" id="GO:0140662">
    <property type="term" value="F:ATP-dependent protein folding chaperone"/>
    <property type="evidence" value="ECO:0007669"/>
    <property type="project" value="InterPro"/>
</dbReference>
<dbReference type="GO" id="GO:0055131">
    <property type="term" value="F:C3HC4-type RING finger domain binding"/>
    <property type="evidence" value="ECO:0000266"/>
    <property type="project" value="RGD"/>
</dbReference>
<dbReference type="GO" id="GO:0038177">
    <property type="term" value="F:death receptor agonist activity"/>
    <property type="evidence" value="ECO:0000266"/>
    <property type="project" value="RGD"/>
</dbReference>
<dbReference type="GO" id="GO:0031249">
    <property type="term" value="F:denatured protein binding"/>
    <property type="evidence" value="ECO:0000266"/>
    <property type="project" value="RGD"/>
</dbReference>
<dbReference type="GO" id="GO:0097718">
    <property type="term" value="F:disordered domain specific binding"/>
    <property type="evidence" value="ECO:0000266"/>
    <property type="project" value="RGD"/>
</dbReference>
<dbReference type="GO" id="GO:0019899">
    <property type="term" value="F:enzyme binding"/>
    <property type="evidence" value="ECO:0000266"/>
    <property type="project" value="RGD"/>
</dbReference>
<dbReference type="GO" id="GO:0001664">
    <property type="term" value="F:G protein-coupled receptor binding"/>
    <property type="evidence" value="ECO:0000266"/>
    <property type="project" value="RGD"/>
</dbReference>
<dbReference type="GO" id="GO:0031072">
    <property type="term" value="F:heat shock protein binding"/>
    <property type="evidence" value="ECO:0000266"/>
    <property type="project" value="RGD"/>
</dbReference>
<dbReference type="GO" id="GO:0042826">
    <property type="term" value="F:histone deacetylase binding"/>
    <property type="evidence" value="ECO:0000266"/>
    <property type="project" value="RGD"/>
</dbReference>
<dbReference type="GO" id="GO:0051787">
    <property type="term" value="F:misfolded protein binding"/>
    <property type="evidence" value="ECO:0000266"/>
    <property type="project" value="RGD"/>
</dbReference>
<dbReference type="GO" id="GO:0051059">
    <property type="term" value="F:NF-kappaB binding"/>
    <property type="evidence" value="ECO:0000353"/>
    <property type="project" value="RGD"/>
</dbReference>
<dbReference type="GO" id="GO:0002020">
    <property type="term" value="F:protease binding"/>
    <property type="evidence" value="ECO:0000353"/>
    <property type="project" value="RGD"/>
</dbReference>
<dbReference type="GO" id="GO:0044183">
    <property type="term" value="F:protein folding chaperone"/>
    <property type="evidence" value="ECO:0000266"/>
    <property type="project" value="RGD"/>
</dbReference>
<dbReference type="GO" id="GO:0048018">
    <property type="term" value="F:receptor ligand activity"/>
    <property type="evidence" value="ECO:0000266"/>
    <property type="project" value="RGD"/>
</dbReference>
<dbReference type="GO" id="GO:0005102">
    <property type="term" value="F:signaling receptor binding"/>
    <property type="evidence" value="ECO:0000266"/>
    <property type="project" value="RGD"/>
</dbReference>
<dbReference type="GO" id="GO:0003714">
    <property type="term" value="F:transcription corepressor activity"/>
    <property type="evidence" value="ECO:0000266"/>
    <property type="project" value="RGD"/>
</dbReference>
<dbReference type="GO" id="GO:0140416">
    <property type="term" value="F:transcription regulator inhibitor activity"/>
    <property type="evidence" value="ECO:0000266"/>
    <property type="project" value="RGD"/>
</dbReference>
<dbReference type="GO" id="GO:0031625">
    <property type="term" value="F:ubiquitin protein ligase binding"/>
    <property type="evidence" value="ECO:0000266"/>
    <property type="project" value="RGD"/>
</dbReference>
<dbReference type="GO" id="GO:0051082">
    <property type="term" value="F:unfolded protein binding"/>
    <property type="evidence" value="ECO:0000266"/>
    <property type="project" value="RGD"/>
</dbReference>
<dbReference type="GO" id="GO:0046034">
    <property type="term" value="P:ATP metabolic process"/>
    <property type="evidence" value="ECO:0000266"/>
    <property type="project" value="RGD"/>
</dbReference>
<dbReference type="GO" id="GO:0007339">
    <property type="term" value="P:binding of sperm to zona pellucida"/>
    <property type="evidence" value="ECO:0000266"/>
    <property type="project" value="RGD"/>
</dbReference>
<dbReference type="GO" id="GO:0070370">
    <property type="term" value="P:cellular heat acclimation"/>
    <property type="evidence" value="ECO:0000266"/>
    <property type="project" value="RGD"/>
</dbReference>
<dbReference type="GO" id="GO:0034605">
    <property type="term" value="P:cellular response to heat"/>
    <property type="evidence" value="ECO:0000266"/>
    <property type="project" value="RGD"/>
</dbReference>
<dbReference type="GO" id="GO:0034620">
    <property type="term" value="P:cellular response to unfolded protein"/>
    <property type="evidence" value="ECO:0000266"/>
    <property type="project" value="RGD"/>
</dbReference>
<dbReference type="GO" id="GO:0051085">
    <property type="term" value="P:chaperone cofactor-dependent protein refolding"/>
    <property type="evidence" value="ECO:0000318"/>
    <property type="project" value="GO_Central"/>
</dbReference>
<dbReference type="GO" id="GO:0051131">
    <property type="term" value="P:chaperone-mediated protein complex assembly"/>
    <property type="evidence" value="ECO:0000266"/>
    <property type="project" value="RGD"/>
</dbReference>
<dbReference type="GO" id="GO:0006952">
    <property type="term" value="P:defense response"/>
    <property type="evidence" value="ECO:0000314"/>
    <property type="project" value="RGD"/>
</dbReference>
<dbReference type="GO" id="GO:0006402">
    <property type="term" value="P:mRNA catabolic process"/>
    <property type="evidence" value="ECO:0000250"/>
    <property type="project" value="UniProtKB"/>
</dbReference>
<dbReference type="GO" id="GO:0043066">
    <property type="term" value="P:negative regulation of apoptotic process"/>
    <property type="evidence" value="ECO:0000314"/>
    <property type="project" value="RGD"/>
</dbReference>
<dbReference type="GO" id="GO:0030308">
    <property type="term" value="P:negative regulation of cell growth"/>
    <property type="evidence" value="ECO:0000250"/>
    <property type="project" value="UniProtKB"/>
</dbReference>
<dbReference type="GO" id="GO:0008285">
    <property type="term" value="P:negative regulation of cell population proliferation"/>
    <property type="evidence" value="ECO:0000250"/>
    <property type="project" value="UniProtKB"/>
</dbReference>
<dbReference type="GO" id="GO:1902236">
    <property type="term" value="P:negative regulation of endoplasmic reticulum stress-induced intrinsic apoptotic signaling pathway"/>
    <property type="evidence" value="ECO:0000266"/>
    <property type="project" value="RGD"/>
</dbReference>
<dbReference type="GO" id="GO:2001240">
    <property type="term" value="P:negative regulation of extrinsic apoptotic signaling pathway in absence of ligand"/>
    <property type="evidence" value="ECO:0000266"/>
    <property type="project" value="RGD"/>
</dbReference>
<dbReference type="GO" id="GO:0090084">
    <property type="term" value="P:negative regulation of inclusion body assembly"/>
    <property type="evidence" value="ECO:0000266"/>
    <property type="project" value="RGD"/>
</dbReference>
<dbReference type="GO" id="GO:1901029">
    <property type="term" value="P:negative regulation of mitochondrial outer membrane permeabilization involved in apoptotic signaling pathway"/>
    <property type="evidence" value="ECO:0000266"/>
    <property type="project" value="RGD"/>
</dbReference>
<dbReference type="GO" id="GO:0031397">
    <property type="term" value="P:negative regulation of protein ubiquitination"/>
    <property type="evidence" value="ECO:0000266"/>
    <property type="project" value="RGD"/>
</dbReference>
<dbReference type="GO" id="GO:0090201">
    <property type="term" value="P:negative regulation of release of cytochrome c from mitochondria"/>
    <property type="evidence" value="ECO:0000315"/>
    <property type="project" value="RGD"/>
</dbReference>
<dbReference type="GO" id="GO:0000122">
    <property type="term" value="P:negative regulation of transcription by RNA polymerase II"/>
    <property type="evidence" value="ECO:0000266"/>
    <property type="project" value="RGD"/>
</dbReference>
<dbReference type="GO" id="GO:0030512">
    <property type="term" value="P:negative regulation of transforming growth factor beta receptor signaling pathway"/>
    <property type="evidence" value="ECO:0000266"/>
    <property type="project" value="RGD"/>
</dbReference>
<dbReference type="GO" id="GO:0045906">
    <property type="term" value="P:negative regulation of vasoconstriction"/>
    <property type="evidence" value="ECO:0000315"/>
    <property type="project" value="RGD"/>
</dbReference>
<dbReference type="GO" id="GO:0045648">
    <property type="term" value="P:positive regulation of erythrocyte differentiation"/>
    <property type="evidence" value="ECO:0000266"/>
    <property type="project" value="RGD"/>
</dbReference>
<dbReference type="GO" id="GO:0010628">
    <property type="term" value="P:positive regulation of gene expression"/>
    <property type="evidence" value="ECO:0000266"/>
    <property type="project" value="RGD"/>
</dbReference>
<dbReference type="GO" id="GO:0032757">
    <property type="term" value="P:positive regulation of interleukin-8 production"/>
    <property type="evidence" value="ECO:0000266"/>
    <property type="project" value="RGD"/>
</dbReference>
<dbReference type="GO" id="GO:0090063">
    <property type="term" value="P:positive regulation of microtubule nucleation"/>
    <property type="evidence" value="ECO:0000250"/>
    <property type="project" value="UniProtKB"/>
</dbReference>
<dbReference type="GO" id="GO:0070434">
    <property type="term" value="P:positive regulation of nucleotide-binding oligomerization domain containing 2 signaling pathway"/>
    <property type="evidence" value="ECO:0000266"/>
    <property type="project" value="RGD"/>
</dbReference>
<dbReference type="GO" id="GO:0032436">
    <property type="term" value="P:positive regulation of proteasomal ubiquitin-dependent protein catabolic process"/>
    <property type="evidence" value="ECO:0000266"/>
    <property type="project" value="RGD"/>
</dbReference>
<dbReference type="GO" id="GO:0033120">
    <property type="term" value="P:positive regulation of RNA splicing"/>
    <property type="evidence" value="ECO:0000266"/>
    <property type="project" value="RGD"/>
</dbReference>
<dbReference type="GO" id="GO:0001916">
    <property type="term" value="P:positive regulation of T cell mediated cytotoxicity"/>
    <property type="evidence" value="ECO:0000314"/>
    <property type="project" value="RGD"/>
</dbReference>
<dbReference type="GO" id="GO:1903265">
    <property type="term" value="P:positive regulation of tumor necrosis factor-mediated signaling pathway"/>
    <property type="evidence" value="ECO:0000266"/>
    <property type="project" value="RGD"/>
</dbReference>
<dbReference type="GO" id="GO:0006457">
    <property type="term" value="P:protein folding"/>
    <property type="evidence" value="ECO:0000266"/>
    <property type="project" value="RGD"/>
</dbReference>
<dbReference type="GO" id="GO:0042026">
    <property type="term" value="P:protein refolding"/>
    <property type="evidence" value="ECO:0000250"/>
    <property type="project" value="UniProtKB"/>
</dbReference>
<dbReference type="GO" id="GO:0050821">
    <property type="term" value="P:protein stabilization"/>
    <property type="evidence" value="ECO:0000266"/>
    <property type="project" value="RGD"/>
</dbReference>
<dbReference type="GO" id="GO:1901673">
    <property type="term" value="P:regulation of mitotic spindle assembly"/>
    <property type="evidence" value="ECO:0000250"/>
    <property type="project" value="UniProtKB"/>
</dbReference>
<dbReference type="GO" id="GO:0031396">
    <property type="term" value="P:regulation of protein ubiquitination"/>
    <property type="evidence" value="ECO:0000266"/>
    <property type="project" value="RGD"/>
</dbReference>
<dbReference type="GO" id="GO:0009408">
    <property type="term" value="P:response to heat"/>
    <property type="evidence" value="ECO:0000266"/>
    <property type="project" value="RGD"/>
</dbReference>
<dbReference type="GO" id="GO:0006986">
    <property type="term" value="P:response to unfolded protein"/>
    <property type="evidence" value="ECO:0000315"/>
    <property type="project" value="RGD"/>
</dbReference>
<dbReference type="CDD" id="cd10233">
    <property type="entry name" value="ASKHA_NBD_HSP70_HSPA1"/>
    <property type="match status" value="1"/>
</dbReference>
<dbReference type="FunFam" id="2.60.34.10:FF:000002">
    <property type="entry name" value="Heat shock 70 kDa"/>
    <property type="match status" value="1"/>
</dbReference>
<dbReference type="FunFam" id="3.30.420.40:FF:000172">
    <property type="entry name" value="Heat shock 70 kDa protein"/>
    <property type="match status" value="1"/>
</dbReference>
<dbReference type="FunFam" id="3.30.30.30:FF:000001">
    <property type="entry name" value="heat shock 70 kDa protein-like"/>
    <property type="match status" value="1"/>
</dbReference>
<dbReference type="FunFam" id="3.30.420.40:FF:000028">
    <property type="entry name" value="heat shock 70 kDa protein-like"/>
    <property type="match status" value="1"/>
</dbReference>
<dbReference type="FunFam" id="3.30.420.40:FF:000135">
    <property type="entry name" value="Heat shock cognate 71 kDa protein"/>
    <property type="match status" value="1"/>
</dbReference>
<dbReference type="FunFam" id="3.90.640.10:FF:000134">
    <property type="entry name" value="Heat shock cognate 71 kDa protein"/>
    <property type="match status" value="1"/>
</dbReference>
<dbReference type="FunFam" id="1.20.1270.10:FF:000003">
    <property type="entry name" value="heat shock cognate 71 kDa protein-like"/>
    <property type="match status" value="1"/>
</dbReference>
<dbReference type="FunFam" id="3.30.420.40:FF:000026">
    <property type="entry name" value="Heat shock protein 70"/>
    <property type="match status" value="1"/>
</dbReference>
<dbReference type="Gene3D" id="1.20.1270.10">
    <property type="match status" value="1"/>
</dbReference>
<dbReference type="Gene3D" id="3.30.30.30">
    <property type="match status" value="1"/>
</dbReference>
<dbReference type="Gene3D" id="3.30.420.40">
    <property type="match status" value="2"/>
</dbReference>
<dbReference type="Gene3D" id="3.90.640.10">
    <property type="entry name" value="Actin, Chain A, domain 4"/>
    <property type="match status" value="1"/>
</dbReference>
<dbReference type="Gene3D" id="2.60.34.10">
    <property type="entry name" value="Substrate Binding Domain Of DNAk, Chain A, domain 1"/>
    <property type="match status" value="1"/>
</dbReference>
<dbReference type="InterPro" id="IPR043129">
    <property type="entry name" value="ATPase_NBD"/>
</dbReference>
<dbReference type="InterPro" id="IPR018181">
    <property type="entry name" value="Heat_shock_70_CS"/>
</dbReference>
<dbReference type="InterPro" id="IPR029048">
    <property type="entry name" value="HSP70_C_sf"/>
</dbReference>
<dbReference type="InterPro" id="IPR029047">
    <property type="entry name" value="HSP70_peptide-bd_sf"/>
</dbReference>
<dbReference type="InterPro" id="IPR013126">
    <property type="entry name" value="Hsp_70_fam"/>
</dbReference>
<dbReference type="NCBIfam" id="NF001413">
    <property type="entry name" value="PRK00290.1"/>
    <property type="match status" value="1"/>
</dbReference>
<dbReference type="PANTHER" id="PTHR19375">
    <property type="entry name" value="HEAT SHOCK PROTEIN 70KDA"/>
    <property type="match status" value="1"/>
</dbReference>
<dbReference type="Pfam" id="PF00012">
    <property type="entry name" value="HSP70"/>
    <property type="match status" value="1"/>
</dbReference>
<dbReference type="PRINTS" id="PR00301">
    <property type="entry name" value="HEATSHOCK70"/>
</dbReference>
<dbReference type="SUPFAM" id="SSF53067">
    <property type="entry name" value="Actin-like ATPase domain"/>
    <property type="match status" value="2"/>
</dbReference>
<dbReference type="SUPFAM" id="SSF100934">
    <property type="entry name" value="Heat shock protein 70kD (HSP70), C-terminal subdomain"/>
    <property type="match status" value="1"/>
</dbReference>
<dbReference type="SUPFAM" id="SSF100920">
    <property type="entry name" value="Heat shock protein 70kD (HSP70), peptide-binding domain"/>
    <property type="match status" value="1"/>
</dbReference>
<dbReference type="PROSITE" id="PS00297">
    <property type="entry name" value="HSP70_1"/>
    <property type="match status" value="1"/>
</dbReference>
<dbReference type="PROSITE" id="PS00329">
    <property type="entry name" value="HSP70_2"/>
    <property type="match status" value="1"/>
</dbReference>
<dbReference type="PROSITE" id="PS01036">
    <property type="entry name" value="HSP70_3"/>
    <property type="match status" value="1"/>
</dbReference>